<keyword id="KW-1185">Reference proteome</keyword>
<keyword id="KW-0687">Ribonucleoprotein</keyword>
<keyword id="KW-0689">Ribosomal protein</keyword>
<keyword id="KW-0694">RNA-binding</keyword>
<keyword id="KW-0699">rRNA-binding</keyword>
<proteinExistence type="inferred from homology"/>
<accession>Q8ZJ99</accession>
<accession>Q0WK85</accession>
<organism>
    <name type="scientific">Yersinia pestis</name>
    <dbReference type="NCBI Taxonomy" id="632"/>
    <lineage>
        <taxon>Bacteria</taxon>
        <taxon>Pseudomonadati</taxon>
        <taxon>Pseudomonadota</taxon>
        <taxon>Gammaproteobacteria</taxon>
        <taxon>Enterobacterales</taxon>
        <taxon>Yersiniaceae</taxon>
        <taxon>Yersinia</taxon>
    </lineage>
</organism>
<comment type="function">
    <text evidence="1">Binds 16S rRNA, required for the assembly of 30S particles and may also be responsible for determining the conformation of the 16S rRNA at the A site.</text>
</comment>
<comment type="subunit">
    <text evidence="1">Part of the 30S ribosomal subunit. Contacts proteins S3 and S10.</text>
</comment>
<comment type="similarity">
    <text evidence="1">Belongs to the universal ribosomal protein uS14 family.</text>
</comment>
<reference key="1">
    <citation type="journal article" date="2001" name="Nature">
        <title>Genome sequence of Yersinia pestis, the causative agent of plague.</title>
        <authorList>
            <person name="Parkhill J."/>
            <person name="Wren B.W."/>
            <person name="Thomson N.R."/>
            <person name="Titball R.W."/>
            <person name="Holden M.T.G."/>
            <person name="Prentice M.B."/>
            <person name="Sebaihia M."/>
            <person name="James K.D."/>
            <person name="Churcher C.M."/>
            <person name="Mungall K.L."/>
            <person name="Baker S."/>
            <person name="Basham D."/>
            <person name="Bentley S.D."/>
            <person name="Brooks K."/>
            <person name="Cerdeno-Tarraga A.-M."/>
            <person name="Chillingworth T."/>
            <person name="Cronin A."/>
            <person name="Davies R.M."/>
            <person name="Davis P."/>
            <person name="Dougan G."/>
            <person name="Feltwell T."/>
            <person name="Hamlin N."/>
            <person name="Holroyd S."/>
            <person name="Jagels K."/>
            <person name="Karlyshev A.V."/>
            <person name="Leather S."/>
            <person name="Moule S."/>
            <person name="Oyston P.C.F."/>
            <person name="Quail M.A."/>
            <person name="Rutherford K.M."/>
            <person name="Simmonds M."/>
            <person name="Skelton J."/>
            <person name="Stevens K."/>
            <person name="Whitehead S."/>
            <person name="Barrell B.G."/>
        </authorList>
    </citation>
    <scope>NUCLEOTIDE SEQUENCE [LARGE SCALE GENOMIC DNA]</scope>
    <source>
        <strain>CO-92 / Biovar Orientalis</strain>
    </source>
</reference>
<reference key="2">
    <citation type="journal article" date="2002" name="J. Bacteriol.">
        <title>Genome sequence of Yersinia pestis KIM.</title>
        <authorList>
            <person name="Deng W."/>
            <person name="Burland V."/>
            <person name="Plunkett G. III"/>
            <person name="Boutin A."/>
            <person name="Mayhew G.F."/>
            <person name="Liss P."/>
            <person name="Perna N.T."/>
            <person name="Rose D.J."/>
            <person name="Mau B."/>
            <person name="Zhou S."/>
            <person name="Schwartz D.C."/>
            <person name="Fetherston J.D."/>
            <person name="Lindler L.E."/>
            <person name="Brubaker R.R."/>
            <person name="Plano G.V."/>
            <person name="Straley S.C."/>
            <person name="McDonough K.A."/>
            <person name="Nilles M.L."/>
            <person name="Matson J.S."/>
            <person name="Blattner F.R."/>
            <person name="Perry R.D."/>
        </authorList>
    </citation>
    <scope>NUCLEOTIDE SEQUENCE [LARGE SCALE GENOMIC DNA]</scope>
    <source>
        <strain>KIM10+ / Biovar Mediaevalis</strain>
    </source>
</reference>
<reference key="3">
    <citation type="journal article" date="2004" name="DNA Res.">
        <title>Complete genome sequence of Yersinia pestis strain 91001, an isolate avirulent to humans.</title>
        <authorList>
            <person name="Song Y."/>
            <person name="Tong Z."/>
            <person name="Wang J."/>
            <person name="Wang L."/>
            <person name="Guo Z."/>
            <person name="Han Y."/>
            <person name="Zhang J."/>
            <person name="Pei D."/>
            <person name="Zhou D."/>
            <person name="Qin H."/>
            <person name="Pang X."/>
            <person name="Han Y."/>
            <person name="Zhai J."/>
            <person name="Li M."/>
            <person name="Cui B."/>
            <person name="Qi Z."/>
            <person name="Jin L."/>
            <person name="Dai R."/>
            <person name="Chen F."/>
            <person name="Li S."/>
            <person name="Ye C."/>
            <person name="Du Z."/>
            <person name="Lin W."/>
            <person name="Wang J."/>
            <person name="Yu J."/>
            <person name="Yang H."/>
            <person name="Wang J."/>
            <person name="Huang P."/>
            <person name="Yang R."/>
        </authorList>
    </citation>
    <scope>NUCLEOTIDE SEQUENCE [LARGE SCALE GENOMIC DNA]</scope>
    <source>
        <strain>91001 / Biovar Mediaevalis</strain>
    </source>
</reference>
<name>RS14_YERPE</name>
<sequence>MAKQSMKAREVVRVKLANKYRAKREELKAIISGVNSSDEDRWDAVLKLQSLPRDSSPSRQRNRCNQTGRPHGFLRKFGLSRIKVRETAMRGEIPGLKKASW</sequence>
<gene>
    <name evidence="1" type="primary">rpsN</name>
    <name type="ordered locus">YPO0222.1</name>
    <name type="ordered locus">y4002</name>
    <name type="ordered locus">YP_0220</name>
    <name type="ORF">YPO0222A</name>
</gene>
<protein>
    <recommendedName>
        <fullName evidence="1">Small ribosomal subunit protein uS14</fullName>
    </recommendedName>
    <alternativeName>
        <fullName evidence="3">30S ribosomal protein S14</fullName>
    </alternativeName>
</protein>
<feature type="chain" id="PRO_0000130962" description="Small ribosomal subunit protein uS14">
    <location>
        <begin position="1"/>
        <end position="101"/>
    </location>
</feature>
<feature type="region of interest" description="Disordered" evidence="2">
    <location>
        <begin position="49"/>
        <end position="70"/>
    </location>
</feature>
<feature type="compositionally biased region" description="Polar residues" evidence="2">
    <location>
        <begin position="52"/>
        <end position="68"/>
    </location>
</feature>
<evidence type="ECO:0000255" key="1">
    <source>
        <dbReference type="HAMAP-Rule" id="MF_00537"/>
    </source>
</evidence>
<evidence type="ECO:0000256" key="2">
    <source>
        <dbReference type="SAM" id="MobiDB-lite"/>
    </source>
</evidence>
<evidence type="ECO:0000305" key="3"/>
<dbReference type="EMBL" id="AL590842">
    <property type="protein sequence ID" value="CAL18905.1"/>
    <property type="molecule type" value="Genomic_DNA"/>
</dbReference>
<dbReference type="EMBL" id="AE009952">
    <property type="protein sequence ID" value="AAM87546.1"/>
    <property type="molecule type" value="Genomic_DNA"/>
</dbReference>
<dbReference type="EMBL" id="AE017042">
    <property type="protein sequence ID" value="AAS60496.1"/>
    <property type="molecule type" value="Genomic_DNA"/>
</dbReference>
<dbReference type="PIR" id="AG0027">
    <property type="entry name" value="AG0027"/>
</dbReference>
<dbReference type="RefSeq" id="WP_002213330.1">
    <property type="nucleotide sequence ID" value="NZ_WUCM01000078.1"/>
</dbReference>
<dbReference type="RefSeq" id="YP_002345303.1">
    <property type="nucleotide sequence ID" value="NC_003143.1"/>
</dbReference>
<dbReference type="SMR" id="Q8ZJ99"/>
<dbReference type="STRING" id="214092.YPO0222a"/>
<dbReference type="PaxDb" id="214092-YPO0222a"/>
<dbReference type="DNASU" id="1148949"/>
<dbReference type="EnsemblBacteria" id="AAS60496">
    <property type="protein sequence ID" value="AAS60496"/>
    <property type="gene ID" value="YP_0220"/>
</dbReference>
<dbReference type="GeneID" id="96663183"/>
<dbReference type="KEGG" id="ype:YPO0222a"/>
<dbReference type="KEGG" id="ypk:y4002"/>
<dbReference type="KEGG" id="ypm:YP_0220"/>
<dbReference type="PATRIC" id="fig|214092.21.peg.451"/>
<dbReference type="eggNOG" id="COG0199">
    <property type="taxonomic scope" value="Bacteria"/>
</dbReference>
<dbReference type="HOGENOM" id="CLU_139869_0_1_6"/>
<dbReference type="OMA" id="FGLCRNQ"/>
<dbReference type="OrthoDB" id="9810484at2"/>
<dbReference type="Proteomes" id="UP000000815">
    <property type="component" value="Chromosome"/>
</dbReference>
<dbReference type="Proteomes" id="UP000001019">
    <property type="component" value="Chromosome"/>
</dbReference>
<dbReference type="Proteomes" id="UP000002490">
    <property type="component" value="Chromosome"/>
</dbReference>
<dbReference type="GO" id="GO:0005737">
    <property type="term" value="C:cytoplasm"/>
    <property type="evidence" value="ECO:0007669"/>
    <property type="project" value="UniProtKB-ARBA"/>
</dbReference>
<dbReference type="GO" id="GO:0015935">
    <property type="term" value="C:small ribosomal subunit"/>
    <property type="evidence" value="ECO:0000318"/>
    <property type="project" value="GO_Central"/>
</dbReference>
<dbReference type="GO" id="GO:0019843">
    <property type="term" value="F:rRNA binding"/>
    <property type="evidence" value="ECO:0007669"/>
    <property type="project" value="UniProtKB-UniRule"/>
</dbReference>
<dbReference type="GO" id="GO:0003735">
    <property type="term" value="F:structural constituent of ribosome"/>
    <property type="evidence" value="ECO:0000318"/>
    <property type="project" value="GO_Central"/>
</dbReference>
<dbReference type="GO" id="GO:0006412">
    <property type="term" value="P:translation"/>
    <property type="evidence" value="ECO:0000318"/>
    <property type="project" value="GO_Central"/>
</dbReference>
<dbReference type="FunFam" id="1.10.287.1480:FF:000001">
    <property type="entry name" value="30S ribosomal protein S14"/>
    <property type="match status" value="1"/>
</dbReference>
<dbReference type="Gene3D" id="1.10.287.1480">
    <property type="match status" value="1"/>
</dbReference>
<dbReference type="HAMAP" id="MF_00537">
    <property type="entry name" value="Ribosomal_uS14_1"/>
    <property type="match status" value="1"/>
</dbReference>
<dbReference type="InterPro" id="IPR001209">
    <property type="entry name" value="Ribosomal_uS14"/>
</dbReference>
<dbReference type="InterPro" id="IPR023036">
    <property type="entry name" value="Ribosomal_uS14_bac/plastid"/>
</dbReference>
<dbReference type="InterPro" id="IPR018271">
    <property type="entry name" value="Ribosomal_uS14_CS"/>
</dbReference>
<dbReference type="NCBIfam" id="NF006477">
    <property type="entry name" value="PRK08881.1"/>
    <property type="match status" value="1"/>
</dbReference>
<dbReference type="PANTHER" id="PTHR19836">
    <property type="entry name" value="30S RIBOSOMAL PROTEIN S14"/>
    <property type="match status" value="1"/>
</dbReference>
<dbReference type="PANTHER" id="PTHR19836:SF19">
    <property type="entry name" value="SMALL RIBOSOMAL SUBUNIT PROTEIN US14M"/>
    <property type="match status" value="1"/>
</dbReference>
<dbReference type="Pfam" id="PF00253">
    <property type="entry name" value="Ribosomal_S14"/>
    <property type="match status" value="1"/>
</dbReference>
<dbReference type="SUPFAM" id="SSF57716">
    <property type="entry name" value="Glucocorticoid receptor-like (DNA-binding domain)"/>
    <property type="match status" value="1"/>
</dbReference>
<dbReference type="PROSITE" id="PS00527">
    <property type="entry name" value="RIBOSOMAL_S14"/>
    <property type="match status" value="1"/>
</dbReference>